<proteinExistence type="evidence at protein level"/>
<feature type="chain" id="PRO_0000347309" description="Unknown protein 22">
    <location>
        <begin position="1" status="less than"/>
        <end position="14" status="greater than"/>
    </location>
</feature>
<feature type="non-terminal residue" evidence="1">
    <location>
        <position position="1"/>
    </location>
</feature>
<feature type="non-terminal residue" evidence="1">
    <location>
        <position position="14"/>
    </location>
</feature>
<reference key="1">
    <citation type="journal article" date="2008" name="J. Proteomics">
        <title>A proteomics approach to identify proteins differentially expressed in Douglas-fir seedlings infected by Phellinus sulphurascens.</title>
        <authorList>
            <person name="Islam M.A."/>
            <person name="Sturrock R.N."/>
            <person name="Ekramoddoullah A.K.M."/>
        </authorList>
    </citation>
    <scope>IDENTIFICATION BY MASS SPECTROMETRY</scope>
</reference>
<sequence length="14" mass="1690">GYIAYVHQNELVKR</sequence>
<protein>
    <recommendedName>
        <fullName>Unknown protein 22</fullName>
    </recommendedName>
</protein>
<name>UP22_PSEMZ</name>
<evidence type="ECO:0000303" key="1">
    <source>
    </source>
</evidence>
<organism>
    <name type="scientific">Pseudotsuga menziesii</name>
    <name type="common">Douglas-fir</name>
    <name type="synonym">Abies menziesii</name>
    <dbReference type="NCBI Taxonomy" id="3357"/>
    <lineage>
        <taxon>Eukaryota</taxon>
        <taxon>Viridiplantae</taxon>
        <taxon>Streptophyta</taxon>
        <taxon>Embryophyta</taxon>
        <taxon>Tracheophyta</taxon>
        <taxon>Spermatophyta</taxon>
        <taxon>Pinopsida</taxon>
        <taxon>Pinidae</taxon>
        <taxon>Conifers I</taxon>
        <taxon>Pinales</taxon>
        <taxon>Pinaceae</taxon>
        <taxon>Pseudotsuga</taxon>
    </lineage>
</organism>
<accession>P85944</accession>